<comment type="function">
    <text evidence="1">Accessory subunit of the mitochondrial membrane respiratory chain NADH dehydrogenase (Complex I), that is believed not to be involved in catalysis. Complex I functions in the transfer of electrons from NADH to the respiratory chain. The immediate electron acceptor for the enzyme is believed to be ubiquinone.</text>
</comment>
<comment type="subunit">
    <text evidence="1">Mammalian complex I is composed of 45 different subunits. This is a component of the iron-sulfur (IP) fragment of the enzyme.</text>
</comment>
<comment type="subcellular location">
    <subcellularLocation>
        <location evidence="1">Mitochondrion inner membrane</location>
        <topology evidence="1">Peripheral membrane protein</topology>
    </subcellularLocation>
    <subcellularLocation>
        <location evidence="1">Mitochondrion intermembrane space</location>
    </subcellularLocation>
</comment>
<comment type="domain">
    <text evidence="1">Contains two C-X9-C motifs that are predicted to form a helix-coil-helix structure, permitting the formation of intramolecular disulfide bonds.</text>
</comment>
<comment type="similarity">
    <text evidence="4">Belongs to the complex I NDUFS5 subunit family.</text>
</comment>
<keyword id="KW-1015">Disulfide bond</keyword>
<keyword id="KW-0249">Electron transport</keyword>
<keyword id="KW-0472">Membrane</keyword>
<keyword id="KW-0496">Mitochondrion</keyword>
<keyword id="KW-0999">Mitochondrion inner membrane</keyword>
<keyword id="KW-0679">Respiratory chain</keyword>
<keyword id="KW-0813">Transport</keyword>
<organism>
    <name type="scientific">Pongo pygmaeus</name>
    <name type="common">Bornean orangutan</name>
    <dbReference type="NCBI Taxonomy" id="9600"/>
    <lineage>
        <taxon>Eukaryota</taxon>
        <taxon>Metazoa</taxon>
        <taxon>Chordata</taxon>
        <taxon>Craniata</taxon>
        <taxon>Vertebrata</taxon>
        <taxon>Euteleostomi</taxon>
        <taxon>Mammalia</taxon>
        <taxon>Eutheria</taxon>
        <taxon>Euarchontoglires</taxon>
        <taxon>Primates</taxon>
        <taxon>Haplorrhini</taxon>
        <taxon>Catarrhini</taxon>
        <taxon>Hominidae</taxon>
        <taxon>Pongo</taxon>
    </lineage>
</organism>
<sequence length="106" mass="12594">MPFLDIQKRFGLNIDRWLTTQSAEQPYKMASRCHAFEKEWIECAHGIGYTRAEKECKIEYDDFIECLLRQKTMRRTGTIRKQRDKLIKEGKYTPPPHHIGKGEPRP</sequence>
<evidence type="ECO:0000250" key="1">
    <source>
        <dbReference type="UniProtKB" id="O43920"/>
    </source>
</evidence>
<evidence type="ECO:0000255" key="2">
    <source>
        <dbReference type="PROSITE-ProRule" id="PRU01150"/>
    </source>
</evidence>
<evidence type="ECO:0000256" key="3">
    <source>
        <dbReference type="SAM" id="MobiDB-lite"/>
    </source>
</evidence>
<evidence type="ECO:0000305" key="4"/>
<proteinExistence type="inferred from homology"/>
<gene>
    <name type="primary">NDUFS5</name>
</gene>
<dbReference type="EMBL" id="DQ885662">
    <property type="protein sequence ID" value="ABH12171.1"/>
    <property type="molecule type" value="mRNA"/>
</dbReference>
<dbReference type="RefSeq" id="XP_054349976.1">
    <property type="nucleotide sequence ID" value="XM_054494001.2"/>
</dbReference>
<dbReference type="RefSeq" id="XP_054349987.1">
    <property type="nucleotide sequence ID" value="XM_054494012.2"/>
</dbReference>
<dbReference type="RefSeq" id="XP_054349995.1">
    <property type="nucleotide sequence ID" value="XM_054494020.2"/>
</dbReference>
<dbReference type="SMR" id="P0CB88"/>
<dbReference type="GeneID" id="129040103"/>
<dbReference type="GO" id="GO:0005743">
    <property type="term" value="C:mitochondrial inner membrane"/>
    <property type="evidence" value="ECO:0007669"/>
    <property type="project" value="UniProtKB-SubCell"/>
</dbReference>
<dbReference type="GO" id="GO:0005758">
    <property type="term" value="C:mitochondrial intermembrane space"/>
    <property type="evidence" value="ECO:0007669"/>
    <property type="project" value="UniProtKB-SubCell"/>
</dbReference>
<dbReference type="GO" id="GO:0005739">
    <property type="term" value="C:mitochondrion"/>
    <property type="evidence" value="ECO:0000250"/>
    <property type="project" value="UniProtKB"/>
</dbReference>
<dbReference type="GO" id="GO:0045271">
    <property type="term" value="C:respiratory chain complex I"/>
    <property type="evidence" value="ECO:0000250"/>
    <property type="project" value="UniProtKB"/>
</dbReference>
<dbReference type="GO" id="GO:0032981">
    <property type="term" value="P:mitochondrial respiratory chain complex I assembly"/>
    <property type="evidence" value="ECO:0000250"/>
    <property type="project" value="UniProtKB"/>
</dbReference>
<dbReference type="CDD" id="cd24141">
    <property type="entry name" value="NDUFS5-like"/>
    <property type="match status" value="1"/>
</dbReference>
<dbReference type="InterPro" id="IPR019342">
    <property type="entry name" value="NADH_UbQ_OxRdtase_FeS-su5"/>
</dbReference>
<dbReference type="PANTHER" id="PTHR15224">
    <property type="entry name" value="NADH DEHYDROGENASE [UBIQUINONE] IRON-SULFUR PROTEIN 5"/>
    <property type="match status" value="1"/>
</dbReference>
<dbReference type="PANTHER" id="PTHR15224:SF1">
    <property type="entry name" value="NADH DEHYDROGENASE [UBIQUINONE] IRON-SULFUR PROTEIN 5"/>
    <property type="match status" value="1"/>
</dbReference>
<dbReference type="Pfam" id="PF10200">
    <property type="entry name" value="Ndufs5"/>
    <property type="match status" value="1"/>
</dbReference>
<dbReference type="PROSITE" id="PS51808">
    <property type="entry name" value="CHCH"/>
    <property type="match status" value="1"/>
</dbReference>
<name>NDUS5_PONPY</name>
<reference key="1">
    <citation type="journal article" date="2006" name="Gene">
        <title>Adaptive selection of mitochondrial complex I subunits during primate radiation.</title>
        <authorList>
            <person name="Mishmar D."/>
            <person name="Ruiz-Pesini E."/>
            <person name="Mondragon-Palomino M."/>
            <person name="Procaccio V."/>
            <person name="Gaut B."/>
            <person name="Wallace D.C."/>
        </authorList>
    </citation>
    <scope>NUCLEOTIDE SEQUENCE [MRNA]</scope>
</reference>
<feature type="chain" id="PRO_0000389250" description="NADH dehydrogenase [ubiquinone] iron-sulfur protein 5">
    <location>
        <begin position="1"/>
        <end position="106"/>
    </location>
</feature>
<feature type="domain" description="CHCH" evidence="2">
    <location>
        <begin position="30"/>
        <end position="74"/>
    </location>
</feature>
<feature type="region of interest" description="Disordered" evidence="3">
    <location>
        <begin position="78"/>
        <end position="106"/>
    </location>
</feature>
<feature type="short sequence motif" description="Cx9C motif 1" evidence="2">
    <location>
        <begin position="33"/>
        <end position="43"/>
    </location>
</feature>
<feature type="short sequence motif" description="Cx9C motif 2" evidence="2">
    <location>
        <begin position="56"/>
        <end position="66"/>
    </location>
</feature>
<feature type="disulfide bond" evidence="2">
    <location>
        <begin position="33"/>
        <end position="66"/>
    </location>
</feature>
<feature type="disulfide bond" evidence="2">
    <location>
        <begin position="43"/>
        <end position="56"/>
    </location>
</feature>
<protein>
    <recommendedName>
        <fullName>NADH dehydrogenase [ubiquinone] iron-sulfur protein 5</fullName>
    </recommendedName>
    <alternativeName>
        <fullName>Complex I-15 kDa</fullName>
        <shortName>CI-15 kDa</shortName>
    </alternativeName>
    <alternativeName>
        <fullName>NADH-ubiquinone oxidoreductase 15 kDa subunit</fullName>
    </alternativeName>
</protein>
<accession>P0CB88</accession>
<accession>Q5R7L6</accession>